<comment type="subcellular location">
    <subcellularLocation>
        <location evidence="2">Cell membrane</location>
        <topology evidence="2">Multi-pass membrane protein</topology>
    </subcellularLocation>
</comment>
<comment type="similarity">
    <text evidence="2">Belongs to the ABC-4 integral membrane protein family.</text>
</comment>
<keyword id="KW-1003">Cell membrane</keyword>
<keyword id="KW-0472">Membrane</keyword>
<keyword id="KW-1185">Reference proteome</keyword>
<keyword id="KW-0812">Transmembrane</keyword>
<keyword id="KW-1133">Transmembrane helix</keyword>
<keyword id="KW-0813">Transport</keyword>
<name>Y1507_METJA</name>
<protein>
    <recommendedName>
        <fullName>Uncharacterized ABC transporter permease MJ1507</fullName>
    </recommendedName>
</protein>
<sequence>MGKSMKVDDIITFAFKNIKQKRTQSLLTIIGIVIGVLAMVSLISLGYGVQNYIHEEMMKMGSNKITILPMKQFGVPPSHLFTKKEIKAIKNVKGVDTVMYGWYGGCEIEYNGEKKFVSYYYAIPSKLREVYKDSGYDIEEGRWLEDNDKYACVIGYGTAHNLFDREIKVGDVIKIKDKKFRVVGILKQIGNQQDDNSIILNIDVGEKLFGNEGKYNFISVTVKEGEDIEKVSEEIKKALKKSFGDEDFSVLTAEQLAKTVSSVLGVITIFVVGVAAISLLVGAVGISNTMHMSILERRKDIGILKALGAETTDILAIFVVESGFLGLFGGIVGLVLGILLAEVIEALAHKMGYLMVNAWISWELIVGVLIFSFLVGVISGYFPARSGAKLNPIETLRGE</sequence>
<proteinExistence type="inferred from homology"/>
<accession>Q58902</accession>
<evidence type="ECO:0000255" key="1"/>
<evidence type="ECO:0000305" key="2"/>
<organism>
    <name type="scientific">Methanocaldococcus jannaschii (strain ATCC 43067 / DSM 2661 / JAL-1 / JCM 10045 / NBRC 100440)</name>
    <name type="common">Methanococcus jannaschii</name>
    <dbReference type="NCBI Taxonomy" id="243232"/>
    <lineage>
        <taxon>Archaea</taxon>
        <taxon>Methanobacteriati</taxon>
        <taxon>Methanobacteriota</taxon>
        <taxon>Methanomada group</taxon>
        <taxon>Methanococci</taxon>
        <taxon>Methanococcales</taxon>
        <taxon>Methanocaldococcaceae</taxon>
        <taxon>Methanocaldococcus</taxon>
    </lineage>
</organism>
<dbReference type="EMBL" id="L77117">
    <property type="protein sequence ID" value="AAB99519.1"/>
    <property type="molecule type" value="Genomic_DNA"/>
</dbReference>
<dbReference type="PIR" id="B64488">
    <property type="entry name" value="B64488"/>
</dbReference>
<dbReference type="SMR" id="Q58902"/>
<dbReference type="STRING" id="243232.MJ_1507"/>
<dbReference type="PaxDb" id="243232-MJ_1507"/>
<dbReference type="EnsemblBacteria" id="AAB99519">
    <property type="protein sequence ID" value="AAB99519"/>
    <property type="gene ID" value="MJ_1507"/>
</dbReference>
<dbReference type="KEGG" id="mja:MJ_1507"/>
<dbReference type="eggNOG" id="arCOG02312">
    <property type="taxonomic scope" value="Archaea"/>
</dbReference>
<dbReference type="HOGENOM" id="CLU_000604_8_0_2"/>
<dbReference type="InParanoid" id="Q58902"/>
<dbReference type="PhylomeDB" id="Q58902"/>
<dbReference type="Proteomes" id="UP000000805">
    <property type="component" value="Chromosome"/>
</dbReference>
<dbReference type="GO" id="GO:0005886">
    <property type="term" value="C:plasma membrane"/>
    <property type="evidence" value="ECO:0000318"/>
    <property type="project" value="GO_Central"/>
</dbReference>
<dbReference type="GO" id="GO:0022857">
    <property type="term" value="F:transmembrane transporter activity"/>
    <property type="evidence" value="ECO:0000318"/>
    <property type="project" value="GO_Central"/>
</dbReference>
<dbReference type="InterPro" id="IPR003838">
    <property type="entry name" value="ABC3_permease_C"/>
</dbReference>
<dbReference type="InterPro" id="IPR025857">
    <property type="entry name" value="MacB_PCD"/>
</dbReference>
<dbReference type="InterPro" id="IPR050250">
    <property type="entry name" value="Macrolide_Exporter_MacB"/>
</dbReference>
<dbReference type="PANTHER" id="PTHR30572:SF4">
    <property type="entry name" value="ABC TRANSPORTER PERMEASE YTRF"/>
    <property type="match status" value="1"/>
</dbReference>
<dbReference type="PANTHER" id="PTHR30572">
    <property type="entry name" value="MEMBRANE COMPONENT OF TRANSPORTER-RELATED"/>
    <property type="match status" value="1"/>
</dbReference>
<dbReference type="Pfam" id="PF02687">
    <property type="entry name" value="FtsX"/>
    <property type="match status" value="1"/>
</dbReference>
<dbReference type="Pfam" id="PF12704">
    <property type="entry name" value="MacB_PCD"/>
    <property type="match status" value="1"/>
</dbReference>
<reference key="1">
    <citation type="journal article" date="1996" name="Science">
        <title>Complete genome sequence of the methanogenic archaeon, Methanococcus jannaschii.</title>
        <authorList>
            <person name="Bult C.J."/>
            <person name="White O."/>
            <person name="Olsen G.J."/>
            <person name="Zhou L."/>
            <person name="Fleischmann R.D."/>
            <person name="Sutton G.G."/>
            <person name="Blake J.A."/>
            <person name="FitzGerald L.M."/>
            <person name="Clayton R.A."/>
            <person name="Gocayne J.D."/>
            <person name="Kerlavage A.R."/>
            <person name="Dougherty B.A."/>
            <person name="Tomb J.-F."/>
            <person name="Adams M.D."/>
            <person name="Reich C.I."/>
            <person name="Overbeek R."/>
            <person name="Kirkness E.F."/>
            <person name="Weinstock K.G."/>
            <person name="Merrick J.M."/>
            <person name="Glodek A."/>
            <person name="Scott J.L."/>
            <person name="Geoghagen N.S.M."/>
            <person name="Weidman J.F."/>
            <person name="Fuhrmann J.L."/>
            <person name="Nguyen D."/>
            <person name="Utterback T.R."/>
            <person name="Kelley J.M."/>
            <person name="Peterson J.D."/>
            <person name="Sadow P.W."/>
            <person name="Hanna M.C."/>
            <person name="Cotton M.D."/>
            <person name="Roberts K.M."/>
            <person name="Hurst M.A."/>
            <person name="Kaine B.P."/>
            <person name="Borodovsky M."/>
            <person name="Klenk H.-P."/>
            <person name="Fraser C.M."/>
            <person name="Smith H.O."/>
            <person name="Woese C.R."/>
            <person name="Venter J.C."/>
        </authorList>
    </citation>
    <scope>NUCLEOTIDE SEQUENCE [LARGE SCALE GENOMIC DNA]</scope>
    <source>
        <strain>ATCC 43067 / DSM 2661 / JAL-1 / JCM 10045 / NBRC 100440</strain>
    </source>
</reference>
<gene>
    <name type="ordered locus">MJ1507</name>
</gene>
<feature type="chain" id="PRO_0000107382" description="Uncharacterized ABC transporter permease MJ1507">
    <location>
        <begin position="1"/>
        <end position="399"/>
    </location>
</feature>
<feature type="transmembrane region" description="Helical" evidence="1">
    <location>
        <begin position="26"/>
        <end position="46"/>
    </location>
</feature>
<feature type="transmembrane region" description="Helical" evidence="1">
    <location>
        <begin position="266"/>
        <end position="286"/>
    </location>
</feature>
<feature type="transmembrane region" description="Helical" evidence="1">
    <location>
        <begin position="301"/>
        <end position="321"/>
    </location>
</feature>
<feature type="transmembrane region" description="Helical" evidence="1">
    <location>
        <begin position="324"/>
        <end position="344"/>
    </location>
</feature>
<feature type="transmembrane region" description="Helical" evidence="1">
    <location>
        <begin position="358"/>
        <end position="378"/>
    </location>
</feature>